<dbReference type="EC" id="2.7.7.7" evidence="1"/>
<dbReference type="EMBL" id="CP000003">
    <property type="protein sequence ID" value="AAT87715.1"/>
    <property type="molecule type" value="Genomic_DNA"/>
</dbReference>
<dbReference type="RefSeq" id="WP_002983063.1">
    <property type="nucleotide sequence ID" value="NC_006086.1"/>
</dbReference>
<dbReference type="SMR" id="Q5XA48"/>
<dbReference type="KEGG" id="spa:M6_Spy1580"/>
<dbReference type="HOGENOM" id="CLU_012348_1_2_9"/>
<dbReference type="Proteomes" id="UP000001167">
    <property type="component" value="Chromosome"/>
</dbReference>
<dbReference type="GO" id="GO:0005829">
    <property type="term" value="C:cytosol"/>
    <property type="evidence" value="ECO:0007669"/>
    <property type="project" value="TreeGrafter"/>
</dbReference>
<dbReference type="GO" id="GO:0003684">
    <property type="term" value="F:damaged DNA binding"/>
    <property type="evidence" value="ECO:0007669"/>
    <property type="project" value="InterPro"/>
</dbReference>
<dbReference type="GO" id="GO:0003887">
    <property type="term" value="F:DNA-directed DNA polymerase activity"/>
    <property type="evidence" value="ECO:0007669"/>
    <property type="project" value="UniProtKB-UniRule"/>
</dbReference>
<dbReference type="GO" id="GO:0000287">
    <property type="term" value="F:magnesium ion binding"/>
    <property type="evidence" value="ECO:0007669"/>
    <property type="project" value="UniProtKB-UniRule"/>
</dbReference>
<dbReference type="GO" id="GO:0006261">
    <property type="term" value="P:DNA-templated DNA replication"/>
    <property type="evidence" value="ECO:0007669"/>
    <property type="project" value="UniProtKB-UniRule"/>
</dbReference>
<dbReference type="GO" id="GO:0042276">
    <property type="term" value="P:error-prone translesion synthesis"/>
    <property type="evidence" value="ECO:0007669"/>
    <property type="project" value="TreeGrafter"/>
</dbReference>
<dbReference type="GO" id="GO:0009432">
    <property type="term" value="P:SOS response"/>
    <property type="evidence" value="ECO:0007669"/>
    <property type="project" value="TreeGrafter"/>
</dbReference>
<dbReference type="CDD" id="cd03586">
    <property type="entry name" value="PolY_Pol_IV_kappa"/>
    <property type="match status" value="1"/>
</dbReference>
<dbReference type="FunFam" id="3.30.1490.100:FF:000004">
    <property type="entry name" value="DNA polymerase IV"/>
    <property type="match status" value="1"/>
</dbReference>
<dbReference type="FunFam" id="3.40.1170.60:FF:000001">
    <property type="entry name" value="DNA polymerase IV"/>
    <property type="match status" value="1"/>
</dbReference>
<dbReference type="Gene3D" id="3.30.70.270">
    <property type="match status" value="1"/>
</dbReference>
<dbReference type="Gene3D" id="3.40.1170.60">
    <property type="match status" value="1"/>
</dbReference>
<dbReference type="Gene3D" id="1.10.150.20">
    <property type="entry name" value="5' to 3' exonuclease, C-terminal subdomain"/>
    <property type="match status" value="1"/>
</dbReference>
<dbReference type="Gene3D" id="3.30.1490.100">
    <property type="entry name" value="DNA polymerase, Y-family, little finger domain"/>
    <property type="match status" value="1"/>
</dbReference>
<dbReference type="HAMAP" id="MF_01113">
    <property type="entry name" value="DNApol_IV"/>
    <property type="match status" value="1"/>
</dbReference>
<dbReference type="InterPro" id="IPR043502">
    <property type="entry name" value="DNA/RNA_pol_sf"/>
</dbReference>
<dbReference type="InterPro" id="IPR036775">
    <property type="entry name" value="DNA_pol_Y-fam_lit_finger_sf"/>
</dbReference>
<dbReference type="InterPro" id="IPR017961">
    <property type="entry name" value="DNA_pol_Y-fam_little_finger"/>
</dbReference>
<dbReference type="InterPro" id="IPR050116">
    <property type="entry name" value="DNA_polymerase-Y"/>
</dbReference>
<dbReference type="InterPro" id="IPR022880">
    <property type="entry name" value="DNApol_IV"/>
</dbReference>
<dbReference type="InterPro" id="IPR024728">
    <property type="entry name" value="PolY_HhH_motif"/>
</dbReference>
<dbReference type="InterPro" id="IPR043128">
    <property type="entry name" value="Rev_trsase/Diguanyl_cyclase"/>
</dbReference>
<dbReference type="InterPro" id="IPR001126">
    <property type="entry name" value="UmuC"/>
</dbReference>
<dbReference type="NCBIfam" id="NF002677">
    <property type="entry name" value="PRK02406.1"/>
    <property type="match status" value="1"/>
</dbReference>
<dbReference type="NCBIfam" id="NF010731">
    <property type="entry name" value="PRK14133.1"/>
    <property type="match status" value="1"/>
</dbReference>
<dbReference type="PANTHER" id="PTHR11076:SF33">
    <property type="entry name" value="DNA POLYMERASE KAPPA"/>
    <property type="match status" value="1"/>
</dbReference>
<dbReference type="PANTHER" id="PTHR11076">
    <property type="entry name" value="DNA REPAIR POLYMERASE UMUC / TRANSFERASE FAMILY MEMBER"/>
    <property type="match status" value="1"/>
</dbReference>
<dbReference type="Pfam" id="PF00817">
    <property type="entry name" value="IMS"/>
    <property type="match status" value="1"/>
</dbReference>
<dbReference type="Pfam" id="PF11799">
    <property type="entry name" value="IMS_C"/>
    <property type="match status" value="1"/>
</dbReference>
<dbReference type="Pfam" id="PF11798">
    <property type="entry name" value="IMS_HHH"/>
    <property type="match status" value="1"/>
</dbReference>
<dbReference type="SUPFAM" id="SSF56672">
    <property type="entry name" value="DNA/RNA polymerases"/>
    <property type="match status" value="1"/>
</dbReference>
<dbReference type="SUPFAM" id="SSF100879">
    <property type="entry name" value="Lesion bypass DNA polymerase (Y-family), little finger domain"/>
    <property type="match status" value="1"/>
</dbReference>
<dbReference type="PROSITE" id="PS50173">
    <property type="entry name" value="UMUC"/>
    <property type="match status" value="1"/>
</dbReference>
<accession>Q5XA48</accession>
<comment type="function">
    <text evidence="1">Poorly processive, error-prone DNA polymerase involved in untargeted mutagenesis. Copies undamaged DNA at stalled replication forks, which arise in vivo from mismatched or misaligned primer ends. These misaligned primers can be extended by PolIV. Exhibits no 3'-5' exonuclease (proofreading) activity. May be involved in translesional synthesis, in conjunction with the beta clamp from PolIII.</text>
</comment>
<comment type="catalytic activity">
    <reaction evidence="1">
        <text>DNA(n) + a 2'-deoxyribonucleoside 5'-triphosphate = DNA(n+1) + diphosphate</text>
        <dbReference type="Rhea" id="RHEA:22508"/>
        <dbReference type="Rhea" id="RHEA-COMP:17339"/>
        <dbReference type="Rhea" id="RHEA-COMP:17340"/>
        <dbReference type="ChEBI" id="CHEBI:33019"/>
        <dbReference type="ChEBI" id="CHEBI:61560"/>
        <dbReference type="ChEBI" id="CHEBI:173112"/>
        <dbReference type="EC" id="2.7.7.7"/>
    </reaction>
</comment>
<comment type="cofactor">
    <cofactor evidence="1">
        <name>Mg(2+)</name>
        <dbReference type="ChEBI" id="CHEBI:18420"/>
    </cofactor>
    <text evidence="1">Binds 2 magnesium ions per subunit.</text>
</comment>
<comment type="subunit">
    <text evidence="1">Monomer.</text>
</comment>
<comment type="subcellular location">
    <subcellularLocation>
        <location evidence="1">Cytoplasm</location>
    </subcellularLocation>
</comment>
<comment type="similarity">
    <text evidence="1">Belongs to the DNA polymerase type-Y family.</text>
</comment>
<proteinExistence type="inferred from homology"/>
<sequence length="364" mass="40760">MLIFPLINDTSRKIIHIDMDAFFAAVEERDNPALKGKPVVIGKDPRETGGRGVVSTCNYEARKYGIHSAMSSKEAYERCPKAIFISGNYEKYRTVGDQIRRIFKRYTDVVEPMSIDEAYLDVTNNKLGIKSAVKIAKLIQHDIWKEVGLTCSAGVSYNKFLAKLASDFEKPHGLTLVLKEDALCFLAKLPIEKFHGVGKKSVEKLHDMGIYTGQDLLAVPEMTLIDHFGRFGFDLYRKARGISNSPVKSDRIRKSIGSERTYAKLLYQETDIKAEISKNAKRVAALLQDHKKLGKTIVLKVRYADFTTLTKRVTLPELTRNAAQIEQVAGDIFDSLSENPAGIRLLGVTMTNLEDKVADISLDL</sequence>
<gene>
    <name evidence="1" type="primary">dinB</name>
    <name type="ordered locus">M6_Spy1580</name>
</gene>
<keyword id="KW-0963">Cytoplasm</keyword>
<keyword id="KW-0227">DNA damage</keyword>
<keyword id="KW-0234">DNA repair</keyword>
<keyword id="KW-0235">DNA replication</keyword>
<keyword id="KW-0238">DNA-binding</keyword>
<keyword id="KW-0239">DNA-directed DNA polymerase</keyword>
<keyword id="KW-0460">Magnesium</keyword>
<keyword id="KW-0479">Metal-binding</keyword>
<keyword id="KW-0515">Mutator protein</keyword>
<keyword id="KW-0548">Nucleotidyltransferase</keyword>
<keyword id="KW-0808">Transferase</keyword>
<name>DPO4_STRP6</name>
<organism>
    <name type="scientific">Streptococcus pyogenes serotype M6 (strain ATCC BAA-946 / MGAS10394)</name>
    <dbReference type="NCBI Taxonomy" id="286636"/>
    <lineage>
        <taxon>Bacteria</taxon>
        <taxon>Bacillati</taxon>
        <taxon>Bacillota</taxon>
        <taxon>Bacilli</taxon>
        <taxon>Lactobacillales</taxon>
        <taxon>Streptococcaceae</taxon>
        <taxon>Streptococcus</taxon>
    </lineage>
</organism>
<feature type="chain" id="PRO_0000173958" description="DNA polymerase IV">
    <location>
        <begin position="1"/>
        <end position="364"/>
    </location>
</feature>
<feature type="domain" description="UmuC" evidence="1">
    <location>
        <begin position="14"/>
        <end position="198"/>
    </location>
</feature>
<feature type="active site" evidence="1">
    <location>
        <position position="117"/>
    </location>
</feature>
<feature type="binding site" evidence="1">
    <location>
        <position position="18"/>
    </location>
    <ligand>
        <name>Mg(2+)</name>
        <dbReference type="ChEBI" id="CHEBI:18420"/>
    </ligand>
</feature>
<feature type="binding site" evidence="1">
    <location>
        <position position="116"/>
    </location>
    <ligand>
        <name>Mg(2+)</name>
        <dbReference type="ChEBI" id="CHEBI:18420"/>
    </ligand>
</feature>
<feature type="site" description="Substrate discrimination" evidence="1">
    <location>
        <position position="23"/>
    </location>
</feature>
<evidence type="ECO:0000255" key="1">
    <source>
        <dbReference type="HAMAP-Rule" id="MF_01113"/>
    </source>
</evidence>
<protein>
    <recommendedName>
        <fullName evidence="1">DNA polymerase IV</fullName>
        <shortName evidence="1">Pol IV</shortName>
        <ecNumber evidence="1">2.7.7.7</ecNumber>
    </recommendedName>
</protein>
<reference key="1">
    <citation type="journal article" date="2004" name="J. Infect. Dis.">
        <title>Progress toward characterization of the group A Streptococcus metagenome: complete genome sequence of a macrolide-resistant serotype M6 strain.</title>
        <authorList>
            <person name="Banks D.J."/>
            <person name="Porcella S.F."/>
            <person name="Barbian K.D."/>
            <person name="Beres S.B."/>
            <person name="Philips L.E."/>
            <person name="Voyich J.M."/>
            <person name="DeLeo F.R."/>
            <person name="Martin J.M."/>
            <person name="Somerville G.A."/>
            <person name="Musser J.M."/>
        </authorList>
    </citation>
    <scope>NUCLEOTIDE SEQUENCE [LARGE SCALE GENOMIC DNA]</scope>
    <source>
        <strain>ATCC BAA-946 / MGAS10394</strain>
    </source>
</reference>